<protein>
    <recommendedName>
        <fullName evidence="1">GMP synthase [glutamine-hydrolyzing]</fullName>
        <ecNumber evidence="1">6.3.5.2</ecNumber>
    </recommendedName>
    <alternativeName>
        <fullName evidence="1">GMP synthetase</fullName>
    </alternativeName>
    <alternativeName>
        <fullName evidence="1">Glutamine amidotransferase</fullName>
    </alternativeName>
</protein>
<gene>
    <name evidence="1" type="primary">guaA</name>
    <name type="ordered locus">SAV0391</name>
</gene>
<name>GUAA_STAAM</name>
<organism>
    <name type="scientific">Staphylococcus aureus (strain Mu50 / ATCC 700699)</name>
    <dbReference type="NCBI Taxonomy" id="158878"/>
    <lineage>
        <taxon>Bacteria</taxon>
        <taxon>Bacillati</taxon>
        <taxon>Bacillota</taxon>
        <taxon>Bacilli</taxon>
        <taxon>Bacillales</taxon>
        <taxon>Staphylococcaceae</taxon>
        <taxon>Staphylococcus</taxon>
    </lineage>
</organism>
<sequence length="513" mass="58202">MEMAKEQELILVLDFGSQYNQLITRRIREMGVYSELHDHEISIEEIKKMNPKGIILSGGPNSVYEEGSFTIDPEIYNLGIPVLGICYGMQLTTKLLGGKVERANEREYGKAIINAKSDELFAGLPAEQTVWMSHSDKVIEIPEGFEVIADSPSTDYAAIEDKKRRIYGVQFHPEVRHTEYGNDLLNNFVRRVCDCKGQWTMENFIEIEIEKIRQRVGDRRVLCAMSGGVDSSVVAVLLHKAIGDQLTCIFVDHGLLRKGEGDMVMEQFGEGFNMNIIRVNAKDRFMNKLKGVSDPEQKRKIIGNEFVYVFDDEASKLKGVDFLAQGTLYTDVIESGTKTAQTIKSHHNVGGLPEDMEFELIEPINTLFKDEVRKLGIELGIPEHLVWRQPFPGPGLGIRVLGEITEDKLEIVRESDAILRQVIREEGLEREIWQYFTVLPNIQSVGVMGDYRTYDHTVGIRAVTSIDGMTSDFARIDWEVLQKISSRIVNEVDHVNRVVYDITSKPPSTIEWE</sequence>
<accession>P64296</accession>
<accession>Q99WI8</accession>
<proteinExistence type="inferred from homology"/>
<comment type="function">
    <text evidence="1">Catalyzes the synthesis of GMP from XMP.</text>
</comment>
<comment type="catalytic activity">
    <reaction evidence="1">
        <text>XMP + L-glutamine + ATP + H2O = GMP + L-glutamate + AMP + diphosphate + 2 H(+)</text>
        <dbReference type="Rhea" id="RHEA:11680"/>
        <dbReference type="ChEBI" id="CHEBI:15377"/>
        <dbReference type="ChEBI" id="CHEBI:15378"/>
        <dbReference type="ChEBI" id="CHEBI:29985"/>
        <dbReference type="ChEBI" id="CHEBI:30616"/>
        <dbReference type="ChEBI" id="CHEBI:33019"/>
        <dbReference type="ChEBI" id="CHEBI:57464"/>
        <dbReference type="ChEBI" id="CHEBI:58115"/>
        <dbReference type="ChEBI" id="CHEBI:58359"/>
        <dbReference type="ChEBI" id="CHEBI:456215"/>
        <dbReference type="EC" id="6.3.5.2"/>
    </reaction>
</comment>
<comment type="pathway">
    <text evidence="1">Purine metabolism; GMP biosynthesis; GMP from XMP (L-Gln route): step 1/1.</text>
</comment>
<comment type="subunit">
    <text evidence="1">Homodimer.</text>
</comment>
<evidence type="ECO:0000255" key="1">
    <source>
        <dbReference type="HAMAP-Rule" id="MF_00344"/>
    </source>
</evidence>
<feature type="chain" id="PRO_0000140176" description="GMP synthase [glutamine-hydrolyzing]">
    <location>
        <begin position="1"/>
        <end position="513"/>
    </location>
</feature>
<feature type="domain" description="Glutamine amidotransferase type-1" evidence="1">
    <location>
        <begin position="9"/>
        <end position="198"/>
    </location>
</feature>
<feature type="domain" description="GMPS ATP-PPase" evidence="1">
    <location>
        <begin position="199"/>
        <end position="388"/>
    </location>
</feature>
<feature type="active site" description="Nucleophile" evidence="1">
    <location>
        <position position="86"/>
    </location>
</feature>
<feature type="active site" evidence="1">
    <location>
        <position position="172"/>
    </location>
</feature>
<feature type="active site" evidence="1">
    <location>
        <position position="174"/>
    </location>
</feature>
<feature type="binding site" evidence="1">
    <location>
        <begin position="226"/>
        <end position="232"/>
    </location>
    <ligand>
        <name>ATP</name>
        <dbReference type="ChEBI" id="CHEBI:30616"/>
    </ligand>
</feature>
<reference key="1">
    <citation type="journal article" date="2001" name="Lancet">
        <title>Whole genome sequencing of meticillin-resistant Staphylococcus aureus.</title>
        <authorList>
            <person name="Kuroda M."/>
            <person name="Ohta T."/>
            <person name="Uchiyama I."/>
            <person name="Baba T."/>
            <person name="Yuzawa H."/>
            <person name="Kobayashi I."/>
            <person name="Cui L."/>
            <person name="Oguchi A."/>
            <person name="Aoki K."/>
            <person name="Nagai Y."/>
            <person name="Lian J.-Q."/>
            <person name="Ito T."/>
            <person name="Kanamori M."/>
            <person name="Matsumaru H."/>
            <person name="Maruyama A."/>
            <person name="Murakami H."/>
            <person name="Hosoyama A."/>
            <person name="Mizutani-Ui Y."/>
            <person name="Takahashi N.K."/>
            <person name="Sawano T."/>
            <person name="Inoue R."/>
            <person name="Kaito C."/>
            <person name="Sekimizu K."/>
            <person name="Hirakawa H."/>
            <person name="Kuhara S."/>
            <person name="Goto S."/>
            <person name="Yabuzaki J."/>
            <person name="Kanehisa M."/>
            <person name="Yamashita A."/>
            <person name="Oshima K."/>
            <person name="Furuya K."/>
            <person name="Yoshino C."/>
            <person name="Shiba T."/>
            <person name="Hattori M."/>
            <person name="Ogasawara N."/>
            <person name="Hayashi H."/>
            <person name="Hiramatsu K."/>
        </authorList>
    </citation>
    <scope>NUCLEOTIDE SEQUENCE [LARGE SCALE GENOMIC DNA]</scope>
    <source>
        <strain>Mu50 / ATCC 700699</strain>
    </source>
</reference>
<keyword id="KW-0067">ATP-binding</keyword>
<keyword id="KW-0315">Glutamine amidotransferase</keyword>
<keyword id="KW-0332">GMP biosynthesis</keyword>
<keyword id="KW-0436">Ligase</keyword>
<keyword id="KW-0547">Nucleotide-binding</keyword>
<keyword id="KW-0658">Purine biosynthesis</keyword>
<dbReference type="EC" id="6.3.5.2" evidence="1"/>
<dbReference type="EMBL" id="BA000017">
    <property type="protein sequence ID" value="BAB56553.1"/>
    <property type="molecule type" value="Genomic_DNA"/>
</dbReference>
<dbReference type="RefSeq" id="WP_000424963.1">
    <property type="nucleotide sequence ID" value="NC_002758.2"/>
</dbReference>
<dbReference type="SMR" id="P64296"/>
<dbReference type="MEROPS" id="C26.957"/>
<dbReference type="GeneID" id="98344714"/>
<dbReference type="KEGG" id="sav:SAV0391"/>
<dbReference type="HOGENOM" id="CLU_014340_0_5_9"/>
<dbReference type="PhylomeDB" id="P64296"/>
<dbReference type="UniPathway" id="UPA00189">
    <property type="reaction ID" value="UER00296"/>
</dbReference>
<dbReference type="Proteomes" id="UP000002481">
    <property type="component" value="Chromosome"/>
</dbReference>
<dbReference type="GO" id="GO:0005829">
    <property type="term" value="C:cytosol"/>
    <property type="evidence" value="ECO:0007669"/>
    <property type="project" value="TreeGrafter"/>
</dbReference>
<dbReference type="GO" id="GO:0005524">
    <property type="term" value="F:ATP binding"/>
    <property type="evidence" value="ECO:0007669"/>
    <property type="project" value="UniProtKB-UniRule"/>
</dbReference>
<dbReference type="GO" id="GO:0003921">
    <property type="term" value="F:GMP synthase activity"/>
    <property type="evidence" value="ECO:0007669"/>
    <property type="project" value="InterPro"/>
</dbReference>
<dbReference type="CDD" id="cd01742">
    <property type="entry name" value="GATase1_GMP_Synthase"/>
    <property type="match status" value="1"/>
</dbReference>
<dbReference type="CDD" id="cd01997">
    <property type="entry name" value="GMP_synthase_C"/>
    <property type="match status" value="1"/>
</dbReference>
<dbReference type="FunFam" id="3.30.300.10:FF:000002">
    <property type="entry name" value="GMP synthase [glutamine-hydrolyzing]"/>
    <property type="match status" value="1"/>
</dbReference>
<dbReference type="FunFam" id="3.40.50.620:FF:000001">
    <property type="entry name" value="GMP synthase [glutamine-hydrolyzing]"/>
    <property type="match status" value="1"/>
</dbReference>
<dbReference type="FunFam" id="3.40.50.880:FF:000001">
    <property type="entry name" value="GMP synthase [glutamine-hydrolyzing]"/>
    <property type="match status" value="1"/>
</dbReference>
<dbReference type="Gene3D" id="3.30.300.10">
    <property type="match status" value="1"/>
</dbReference>
<dbReference type="Gene3D" id="3.40.50.880">
    <property type="match status" value="1"/>
</dbReference>
<dbReference type="Gene3D" id="3.40.50.620">
    <property type="entry name" value="HUPs"/>
    <property type="match status" value="1"/>
</dbReference>
<dbReference type="HAMAP" id="MF_00344">
    <property type="entry name" value="GMP_synthase"/>
    <property type="match status" value="1"/>
</dbReference>
<dbReference type="InterPro" id="IPR029062">
    <property type="entry name" value="Class_I_gatase-like"/>
</dbReference>
<dbReference type="InterPro" id="IPR017926">
    <property type="entry name" value="GATASE"/>
</dbReference>
<dbReference type="InterPro" id="IPR001674">
    <property type="entry name" value="GMP_synth_C"/>
</dbReference>
<dbReference type="InterPro" id="IPR004739">
    <property type="entry name" value="GMP_synth_GATase"/>
</dbReference>
<dbReference type="InterPro" id="IPR022955">
    <property type="entry name" value="GMP_synthase"/>
</dbReference>
<dbReference type="InterPro" id="IPR025777">
    <property type="entry name" value="GMPS_ATP_PPase_dom"/>
</dbReference>
<dbReference type="InterPro" id="IPR014729">
    <property type="entry name" value="Rossmann-like_a/b/a_fold"/>
</dbReference>
<dbReference type="NCBIfam" id="TIGR00884">
    <property type="entry name" value="guaA_Cterm"/>
    <property type="match status" value="1"/>
</dbReference>
<dbReference type="NCBIfam" id="TIGR00888">
    <property type="entry name" value="guaA_Nterm"/>
    <property type="match status" value="1"/>
</dbReference>
<dbReference type="NCBIfam" id="NF000848">
    <property type="entry name" value="PRK00074.1"/>
    <property type="match status" value="1"/>
</dbReference>
<dbReference type="PANTHER" id="PTHR11922:SF2">
    <property type="entry name" value="GMP SYNTHASE [GLUTAMINE-HYDROLYZING]"/>
    <property type="match status" value="1"/>
</dbReference>
<dbReference type="PANTHER" id="PTHR11922">
    <property type="entry name" value="GMP SYNTHASE-RELATED"/>
    <property type="match status" value="1"/>
</dbReference>
<dbReference type="Pfam" id="PF00117">
    <property type="entry name" value="GATase"/>
    <property type="match status" value="1"/>
</dbReference>
<dbReference type="Pfam" id="PF00958">
    <property type="entry name" value="GMP_synt_C"/>
    <property type="match status" value="1"/>
</dbReference>
<dbReference type="Pfam" id="PF03054">
    <property type="entry name" value="tRNA_Me_trans"/>
    <property type="match status" value="1"/>
</dbReference>
<dbReference type="PRINTS" id="PR00097">
    <property type="entry name" value="ANTSNTHASEII"/>
</dbReference>
<dbReference type="PRINTS" id="PR00099">
    <property type="entry name" value="CPSGATASE"/>
</dbReference>
<dbReference type="PRINTS" id="PR00096">
    <property type="entry name" value="GATASE"/>
</dbReference>
<dbReference type="SUPFAM" id="SSF52402">
    <property type="entry name" value="Adenine nucleotide alpha hydrolases-like"/>
    <property type="match status" value="1"/>
</dbReference>
<dbReference type="SUPFAM" id="SSF52317">
    <property type="entry name" value="Class I glutamine amidotransferase-like"/>
    <property type="match status" value="1"/>
</dbReference>
<dbReference type="SUPFAM" id="SSF54810">
    <property type="entry name" value="GMP synthetase C-terminal dimerisation domain"/>
    <property type="match status" value="1"/>
</dbReference>
<dbReference type="PROSITE" id="PS51273">
    <property type="entry name" value="GATASE_TYPE_1"/>
    <property type="match status" value="1"/>
</dbReference>
<dbReference type="PROSITE" id="PS51553">
    <property type="entry name" value="GMPS_ATP_PPASE"/>
    <property type="match status" value="1"/>
</dbReference>